<feature type="chain" id="PRO_1000090530" description="Crossover junction endodeoxyribonuclease RuvC">
    <location>
        <begin position="1"/>
        <end position="178"/>
    </location>
</feature>
<feature type="active site" evidence="1">
    <location>
        <position position="7"/>
    </location>
</feature>
<feature type="active site" evidence="1">
    <location>
        <position position="67"/>
    </location>
</feature>
<feature type="active site" evidence="1">
    <location>
        <position position="139"/>
    </location>
</feature>
<feature type="binding site" evidence="1">
    <location>
        <position position="7"/>
    </location>
    <ligand>
        <name>Mg(2+)</name>
        <dbReference type="ChEBI" id="CHEBI:18420"/>
        <label>1</label>
    </ligand>
</feature>
<feature type="binding site" evidence="1">
    <location>
        <position position="67"/>
    </location>
    <ligand>
        <name>Mg(2+)</name>
        <dbReference type="ChEBI" id="CHEBI:18420"/>
        <label>2</label>
    </ligand>
</feature>
<feature type="binding site" evidence="1">
    <location>
        <position position="139"/>
    </location>
    <ligand>
        <name>Mg(2+)</name>
        <dbReference type="ChEBI" id="CHEBI:18420"/>
        <label>1</label>
    </ligand>
</feature>
<organism>
    <name type="scientific">Trichlorobacter lovleyi (strain ATCC BAA-1151 / DSM 17278 / SZ)</name>
    <name type="common">Geobacter lovleyi</name>
    <dbReference type="NCBI Taxonomy" id="398767"/>
    <lineage>
        <taxon>Bacteria</taxon>
        <taxon>Pseudomonadati</taxon>
        <taxon>Thermodesulfobacteriota</taxon>
        <taxon>Desulfuromonadia</taxon>
        <taxon>Geobacterales</taxon>
        <taxon>Geobacteraceae</taxon>
        <taxon>Trichlorobacter</taxon>
    </lineage>
</organism>
<keyword id="KW-0963">Cytoplasm</keyword>
<keyword id="KW-0227">DNA damage</keyword>
<keyword id="KW-0233">DNA recombination</keyword>
<keyword id="KW-0234">DNA repair</keyword>
<keyword id="KW-0238">DNA-binding</keyword>
<keyword id="KW-0255">Endonuclease</keyword>
<keyword id="KW-0378">Hydrolase</keyword>
<keyword id="KW-0460">Magnesium</keyword>
<keyword id="KW-0479">Metal-binding</keyword>
<keyword id="KW-0540">Nuclease</keyword>
<keyword id="KW-1185">Reference proteome</keyword>
<name>RUVC_TRIL1</name>
<evidence type="ECO:0000255" key="1">
    <source>
        <dbReference type="HAMAP-Rule" id="MF_00034"/>
    </source>
</evidence>
<proteinExistence type="inferred from homology"/>
<protein>
    <recommendedName>
        <fullName evidence="1">Crossover junction endodeoxyribonuclease RuvC</fullName>
        <ecNumber evidence="1">3.1.21.10</ecNumber>
    </recommendedName>
    <alternativeName>
        <fullName evidence="1">Holliday junction nuclease RuvC</fullName>
    </alternativeName>
    <alternativeName>
        <fullName evidence="1">Holliday junction resolvase RuvC</fullName>
    </alternativeName>
</protein>
<dbReference type="EC" id="3.1.21.10" evidence="1"/>
<dbReference type="EMBL" id="CP001089">
    <property type="protein sequence ID" value="ACD94969.1"/>
    <property type="molecule type" value="Genomic_DNA"/>
</dbReference>
<dbReference type="RefSeq" id="WP_012469317.1">
    <property type="nucleotide sequence ID" value="NC_010814.1"/>
</dbReference>
<dbReference type="SMR" id="B3E789"/>
<dbReference type="STRING" id="398767.Glov_1247"/>
<dbReference type="KEGG" id="glo:Glov_1247"/>
<dbReference type="eggNOG" id="COG0817">
    <property type="taxonomic scope" value="Bacteria"/>
</dbReference>
<dbReference type="HOGENOM" id="CLU_091257_3_1_7"/>
<dbReference type="OrthoDB" id="9805499at2"/>
<dbReference type="Proteomes" id="UP000002420">
    <property type="component" value="Chromosome"/>
</dbReference>
<dbReference type="GO" id="GO:0005737">
    <property type="term" value="C:cytoplasm"/>
    <property type="evidence" value="ECO:0007669"/>
    <property type="project" value="UniProtKB-SubCell"/>
</dbReference>
<dbReference type="GO" id="GO:0048476">
    <property type="term" value="C:Holliday junction resolvase complex"/>
    <property type="evidence" value="ECO:0007669"/>
    <property type="project" value="UniProtKB-UniRule"/>
</dbReference>
<dbReference type="GO" id="GO:0008821">
    <property type="term" value="F:crossover junction DNA endonuclease activity"/>
    <property type="evidence" value="ECO:0007669"/>
    <property type="project" value="UniProtKB-UniRule"/>
</dbReference>
<dbReference type="GO" id="GO:0003677">
    <property type="term" value="F:DNA binding"/>
    <property type="evidence" value="ECO:0007669"/>
    <property type="project" value="UniProtKB-KW"/>
</dbReference>
<dbReference type="GO" id="GO:0000287">
    <property type="term" value="F:magnesium ion binding"/>
    <property type="evidence" value="ECO:0007669"/>
    <property type="project" value="UniProtKB-UniRule"/>
</dbReference>
<dbReference type="GO" id="GO:0006310">
    <property type="term" value="P:DNA recombination"/>
    <property type="evidence" value="ECO:0007669"/>
    <property type="project" value="UniProtKB-UniRule"/>
</dbReference>
<dbReference type="GO" id="GO:0006281">
    <property type="term" value="P:DNA repair"/>
    <property type="evidence" value="ECO:0007669"/>
    <property type="project" value="UniProtKB-UniRule"/>
</dbReference>
<dbReference type="CDD" id="cd16962">
    <property type="entry name" value="RuvC"/>
    <property type="match status" value="1"/>
</dbReference>
<dbReference type="FunFam" id="3.30.420.10:FF:000002">
    <property type="entry name" value="Crossover junction endodeoxyribonuclease RuvC"/>
    <property type="match status" value="1"/>
</dbReference>
<dbReference type="Gene3D" id="3.30.420.10">
    <property type="entry name" value="Ribonuclease H-like superfamily/Ribonuclease H"/>
    <property type="match status" value="1"/>
</dbReference>
<dbReference type="HAMAP" id="MF_00034">
    <property type="entry name" value="RuvC"/>
    <property type="match status" value="1"/>
</dbReference>
<dbReference type="InterPro" id="IPR012337">
    <property type="entry name" value="RNaseH-like_sf"/>
</dbReference>
<dbReference type="InterPro" id="IPR036397">
    <property type="entry name" value="RNaseH_sf"/>
</dbReference>
<dbReference type="InterPro" id="IPR020563">
    <property type="entry name" value="X-over_junc_endoDNase_Mg_BS"/>
</dbReference>
<dbReference type="InterPro" id="IPR002176">
    <property type="entry name" value="X-over_junc_endoDNase_RuvC"/>
</dbReference>
<dbReference type="NCBIfam" id="NF000711">
    <property type="entry name" value="PRK00039.2-1"/>
    <property type="match status" value="1"/>
</dbReference>
<dbReference type="NCBIfam" id="TIGR00228">
    <property type="entry name" value="ruvC"/>
    <property type="match status" value="1"/>
</dbReference>
<dbReference type="PANTHER" id="PTHR30194">
    <property type="entry name" value="CROSSOVER JUNCTION ENDODEOXYRIBONUCLEASE RUVC"/>
    <property type="match status" value="1"/>
</dbReference>
<dbReference type="PANTHER" id="PTHR30194:SF3">
    <property type="entry name" value="CROSSOVER JUNCTION ENDODEOXYRIBONUCLEASE RUVC"/>
    <property type="match status" value="1"/>
</dbReference>
<dbReference type="Pfam" id="PF02075">
    <property type="entry name" value="RuvC"/>
    <property type="match status" value="1"/>
</dbReference>
<dbReference type="PRINTS" id="PR00696">
    <property type="entry name" value="RSOLVASERUVC"/>
</dbReference>
<dbReference type="SUPFAM" id="SSF53098">
    <property type="entry name" value="Ribonuclease H-like"/>
    <property type="match status" value="1"/>
</dbReference>
<dbReference type="PROSITE" id="PS01321">
    <property type="entry name" value="RUVC"/>
    <property type="match status" value="1"/>
</dbReference>
<comment type="function">
    <text evidence="1">The RuvA-RuvB-RuvC complex processes Holliday junction (HJ) DNA during genetic recombination and DNA repair. Endonuclease that resolves HJ intermediates. Cleaves cruciform DNA by making single-stranded nicks across the HJ at symmetrical positions within the homologous arms, yielding a 5'-phosphate and a 3'-hydroxyl group; requires a central core of homology in the junction. The consensus cleavage sequence is 5'-(A/T)TT(C/G)-3'. Cleavage occurs on the 3'-side of the TT dinucleotide at the point of strand exchange. HJ branch migration catalyzed by RuvA-RuvB allows RuvC to scan DNA until it finds its consensus sequence, where it cleaves and resolves the cruciform DNA.</text>
</comment>
<comment type="catalytic activity">
    <reaction evidence="1">
        <text>Endonucleolytic cleavage at a junction such as a reciprocal single-stranded crossover between two homologous DNA duplexes (Holliday junction).</text>
        <dbReference type="EC" id="3.1.21.10"/>
    </reaction>
</comment>
<comment type="cofactor">
    <cofactor evidence="1">
        <name>Mg(2+)</name>
        <dbReference type="ChEBI" id="CHEBI:18420"/>
    </cofactor>
    <text evidence="1">Binds 2 Mg(2+) ion per subunit.</text>
</comment>
<comment type="subunit">
    <text evidence="1">Homodimer which binds Holliday junction (HJ) DNA. The HJ becomes 2-fold symmetrical on binding to RuvC with unstacked arms; it has a different conformation from HJ DNA in complex with RuvA. In the full resolvosome a probable DNA-RuvA(4)-RuvB(12)-RuvC(2) complex forms which resolves the HJ.</text>
</comment>
<comment type="subcellular location">
    <subcellularLocation>
        <location evidence="1">Cytoplasm</location>
    </subcellularLocation>
</comment>
<comment type="similarity">
    <text evidence="1">Belongs to the RuvC family.</text>
</comment>
<sequence length="178" mass="19034">MRVLGIDPGSRITGYGLVEQHGSRLVHLDNGAVFTDKAKDFPDRLRLIFEGLSRVIAEYAPDAVAVEDVYVSENVRAALKLGQARGAAIAAAVHAGLPVFEYTASQVKQAVVGQGRAGKEQVQKMVKALLGLPEIAQADASDAVAVAICHINSYQLRLQAGPAVATSRRASSWRNYRP</sequence>
<reference key="1">
    <citation type="submission" date="2008-05" db="EMBL/GenBank/DDBJ databases">
        <title>Complete sequence of chromosome of Geobacter lovleyi SZ.</title>
        <authorList>
            <consortium name="US DOE Joint Genome Institute"/>
            <person name="Lucas S."/>
            <person name="Copeland A."/>
            <person name="Lapidus A."/>
            <person name="Glavina del Rio T."/>
            <person name="Dalin E."/>
            <person name="Tice H."/>
            <person name="Bruce D."/>
            <person name="Goodwin L."/>
            <person name="Pitluck S."/>
            <person name="Chertkov O."/>
            <person name="Meincke L."/>
            <person name="Brettin T."/>
            <person name="Detter J.C."/>
            <person name="Han C."/>
            <person name="Tapia R."/>
            <person name="Kuske C.R."/>
            <person name="Schmutz J."/>
            <person name="Larimer F."/>
            <person name="Land M."/>
            <person name="Hauser L."/>
            <person name="Kyrpides N."/>
            <person name="Mikhailova N."/>
            <person name="Sung Y."/>
            <person name="Fletcher K.E."/>
            <person name="Ritalahti K.M."/>
            <person name="Loeffler F.E."/>
            <person name="Richardson P."/>
        </authorList>
    </citation>
    <scope>NUCLEOTIDE SEQUENCE [LARGE SCALE GENOMIC DNA]</scope>
    <source>
        <strain>ATCC BAA-1151 / DSM 17278 / SZ</strain>
    </source>
</reference>
<gene>
    <name evidence="1" type="primary">ruvC</name>
    <name type="ordered locus">Glov_1247</name>
</gene>
<accession>B3E789</accession>